<keyword id="KW-0217">Developmental protein</keyword>
<keyword id="KW-0238">DNA-binding</keyword>
<keyword id="KW-0479">Metal-binding</keyword>
<keyword id="KW-0539">Nucleus</keyword>
<keyword id="KW-1185">Reference proteome</keyword>
<keyword id="KW-0804">Transcription</keyword>
<keyword id="KW-0805">Transcription regulation</keyword>
<keyword id="KW-0862">Zinc</keyword>
<keyword id="KW-0863">Zinc-finger</keyword>
<feature type="chain" id="PRO_0000456877" description="FLYWCH-type zinc finger-containing protein peb-1">
    <location>
        <begin position="1"/>
        <end position="432"/>
    </location>
</feature>
<feature type="DNA-binding region" description="Required for DNA-binding" evidence="1">
    <location>
        <begin position="30"/>
        <end position="188"/>
    </location>
</feature>
<feature type="zinc finger region" description="FLYWCH-type" evidence="2">
    <location>
        <begin position="53"/>
        <end position="120"/>
    </location>
</feature>
<feature type="region of interest" description="Disordered" evidence="3">
    <location>
        <begin position="1"/>
        <end position="33"/>
    </location>
</feature>
<feature type="region of interest" description="Disordered" evidence="3">
    <location>
        <begin position="174"/>
        <end position="195"/>
    </location>
</feature>
<feature type="compositionally biased region" description="Low complexity" evidence="3">
    <location>
        <begin position="9"/>
        <end position="26"/>
    </location>
</feature>
<comment type="function">
    <text evidence="1">Putative transcription factor. Binds to specific sequence motif 5'-[TC][AGT]TGCC[GA][AT]-3' in regulatory elements of target genes such as myosin myo-2. May modulate gene expression, perhaps acting in opposition to transcription factor pha-4. Involved in morphogenesis, perhaps especially in formation of the pharynx. Plays roles in molting, feeding and morphology.</text>
</comment>
<comment type="subcellular location">
    <subcellularLocation>
        <location evidence="4">Nucleus</location>
    </subcellularLocation>
    <text evidence="1">Localization to nucleus dependent, in part, on FLYWCH-type domain.</text>
</comment>
<comment type="developmental stage">
    <text evidence="4">Expressed in 1.5-fold stage embryos, in developing pharynx and at lower levels in hypodermal cells and the hindgut (at protein level).</text>
</comment>
<sequence>MLGLEKPLSSDISSSSTDTSAISPISVSSMPLSPDKEKKKIKFIRYNPDIPQIVTSFKGYQKLMYQGYRYNIYQVVPEKNFKSWRCVCAKKMPDDGQWCKCRAETTSDNSNACTKNTHNHPPKHRVAEIEFIKSQLINAAFENPDHDAGDLINQACMYLSEGVSFDNKESLKKSLVSARNKEGKPRKPKSKTSTNPLKRMKIEIEEEDENVFKMQRMDNDITGFLPLLNNSISMVKVESPFSTTPTIQIPPPNPPQIHQPQEHSNLLQPAALNGFNNSWMGGIEDPIAMFWANAMLNPSGLDVLSTIAALSKHQLHSQGPTQAATAPAAPLSSNLSVSSFTPQMPKEASMAIPPTQILNLKDLKPLPPLAAIQTSPVIQAASLLRPIPMKNDMGTQTVEEIKVSRCLTSGCGCRVIRICCCDEGRCRRAAAC</sequence>
<protein>
    <recommendedName>
        <fullName evidence="1">FLYWCH-type zinc finger-containing protein peb-1</fullName>
    </recommendedName>
</protein>
<reference evidence="6" key="1">
    <citation type="journal article" date="2003" name="PLoS Biol.">
        <title>The genome sequence of Caenorhabditis briggsae: a platform for comparative genomics.</title>
        <authorList>
            <person name="Stein L.D."/>
            <person name="Bao Z."/>
            <person name="Blasiar D."/>
            <person name="Blumenthal T."/>
            <person name="Brent M.R."/>
            <person name="Chen N."/>
            <person name="Chinwalla A."/>
            <person name="Clarke L."/>
            <person name="Clee C."/>
            <person name="Coghlan A."/>
            <person name="Coulson A."/>
            <person name="D'Eustachio P."/>
            <person name="Fitch D.H.A."/>
            <person name="Fulton L.A."/>
            <person name="Fulton R.E."/>
            <person name="Griffiths-Jones S."/>
            <person name="Harris T.W."/>
            <person name="Hillier L.W."/>
            <person name="Kamath R."/>
            <person name="Kuwabara P.E."/>
            <person name="Mardis E.R."/>
            <person name="Marra M.A."/>
            <person name="Miner T.L."/>
            <person name="Minx P."/>
            <person name="Mullikin J.C."/>
            <person name="Plumb R.W."/>
            <person name="Rogers J."/>
            <person name="Schein J.E."/>
            <person name="Sohrmann M."/>
            <person name="Spieth J."/>
            <person name="Stajich J.E."/>
            <person name="Wei C."/>
            <person name="Willey D."/>
            <person name="Wilson R.K."/>
            <person name="Durbin R.M."/>
            <person name="Waterston R.H."/>
        </authorList>
    </citation>
    <scope>NUCLEOTIDE SEQUENCE [LARGE SCALE GENOMIC DNA]</scope>
    <source>
        <strain evidence="6">AF16</strain>
    </source>
</reference>
<reference evidence="5" key="2">
    <citation type="journal article" date="2004" name="J. Mol. Biol.">
        <title>DNA binding and in vivo function of C.elegans PEB-1 require a conserved FLYWCH motif.</title>
        <authorList>
            <person name="Beaster-Jones L."/>
            <person name="Okkema P.G."/>
        </authorList>
    </citation>
    <scope>SUBCELLULAR LOCATION</scope>
    <scope>DEVELOPMENTAL STAGE</scope>
</reference>
<dbReference type="EMBL" id="HE600983">
    <property type="protein sequence ID" value="CAP32723.1"/>
    <property type="molecule type" value="Genomic_DNA"/>
</dbReference>
<dbReference type="FunCoup" id="A8XJ98">
    <property type="interactions" value="1275"/>
</dbReference>
<dbReference type="STRING" id="6238.A8XJ98"/>
<dbReference type="KEGG" id="cbr:CBG_14059"/>
<dbReference type="CTD" id="8586280"/>
<dbReference type="WormBase" id="CBG14059">
    <property type="protein sequence ID" value="CBP45836"/>
    <property type="gene ID" value="WBGene00034692"/>
    <property type="gene designation" value="Cbr-peb-1"/>
</dbReference>
<dbReference type="eggNOG" id="ENOG502SRUM">
    <property type="taxonomic scope" value="Eukaryota"/>
</dbReference>
<dbReference type="HOGENOM" id="CLU_642881_0_0_1"/>
<dbReference type="InParanoid" id="A8XJ98"/>
<dbReference type="OMA" id="VIRICCC"/>
<dbReference type="Proteomes" id="UP000008549">
    <property type="component" value="Unassembled WGS sequence"/>
</dbReference>
<dbReference type="GO" id="GO:0005634">
    <property type="term" value="C:nucleus"/>
    <property type="evidence" value="ECO:0000314"/>
    <property type="project" value="UniProtKB"/>
</dbReference>
<dbReference type="GO" id="GO:0000978">
    <property type="term" value="F:RNA polymerase II cis-regulatory region sequence-specific DNA binding"/>
    <property type="evidence" value="ECO:0007669"/>
    <property type="project" value="EnsemblMetazoa"/>
</dbReference>
<dbReference type="GO" id="GO:0008270">
    <property type="term" value="F:zinc ion binding"/>
    <property type="evidence" value="ECO:0007669"/>
    <property type="project" value="UniProtKB-KW"/>
</dbReference>
<dbReference type="GO" id="GO:0000122">
    <property type="term" value="P:negative regulation of transcription by RNA polymerase II"/>
    <property type="evidence" value="ECO:0007669"/>
    <property type="project" value="EnsemblMetazoa"/>
</dbReference>
<dbReference type="GO" id="GO:0045944">
    <property type="term" value="P:positive regulation of transcription by RNA polymerase II"/>
    <property type="evidence" value="ECO:0007669"/>
    <property type="project" value="EnsemblMetazoa"/>
</dbReference>
<dbReference type="Gene3D" id="2.20.25.240">
    <property type="match status" value="1"/>
</dbReference>
<dbReference type="InterPro" id="IPR007588">
    <property type="entry name" value="Znf_FLYWCH"/>
</dbReference>
<dbReference type="Pfam" id="PF04500">
    <property type="entry name" value="FLYWCH"/>
    <property type="match status" value="1"/>
</dbReference>
<name>FPEB1_CAEBR</name>
<evidence type="ECO:0000250" key="1">
    <source>
        <dbReference type="UniProtKB" id="A0A5S9MMK5"/>
    </source>
</evidence>
<evidence type="ECO:0000255" key="2"/>
<evidence type="ECO:0000256" key="3">
    <source>
        <dbReference type="SAM" id="MobiDB-lite"/>
    </source>
</evidence>
<evidence type="ECO:0000269" key="4">
    <source>
    </source>
</evidence>
<evidence type="ECO:0000305" key="5"/>
<evidence type="ECO:0000312" key="6">
    <source>
        <dbReference type="Proteomes" id="UP000008549"/>
    </source>
</evidence>
<evidence type="ECO:0000312" key="7">
    <source>
        <dbReference type="WormBase" id="CBG14059"/>
    </source>
</evidence>
<gene>
    <name evidence="7" type="primary">peb-1</name>
    <name evidence="7" type="ORF">CBG14059</name>
</gene>
<organism evidence="6">
    <name type="scientific">Caenorhabditis briggsae</name>
    <dbReference type="NCBI Taxonomy" id="6238"/>
    <lineage>
        <taxon>Eukaryota</taxon>
        <taxon>Metazoa</taxon>
        <taxon>Ecdysozoa</taxon>
        <taxon>Nematoda</taxon>
        <taxon>Chromadorea</taxon>
        <taxon>Rhabditida</taxon>
        <taxon>Rhabditina</taxon>
        <taxon>Rhabditomorpha</taxon>
        <taxon>Rhabditoidea</taxon>
        <taxon>Rhabditidae</taxon>
        <taxon>Peloderinae</taxon>
        <taxon>Caenorhabditis</taxon>
    </lineage>
</organism>
<accession>A8XJ98</accession>
<proteinExistence type="evidence at protein level"/>